<proteinExistence type="evidence at protein level"/>
<name>TX1B_PHOKE</name>
<accession>P84063</accession>
<comment type="function">
    <text evidence="3">Lethal neurotoxin. Causes spastic paralysis and death in mice in 4-6 minutes after intracerebroventricular injection at dose levels of 1.5 ug per mouse.</text>
</comment>
<comment type="subcellular location">
    <subcellularLocation>
        <location evidence="2">Secreted</location>
    </subcellularLocation>
</comment>
<comment type="tissue specificity">
    <text evidence="2">Expressed by the venom gland.</text>
</comment>
<comment type="domain">
    <text evidence="6">The presence of a 'disulfide through disulfide knot' structurally defines this protein as a knottin.</text>
</comment>
<comment type="similarity">
    <text evidence="6">Belongs to the neurotoxin 04 (omega-agtx) family. 02 (Tx1) subfamily.</text>
</comment>
<sequence length="30" mass="3099">AELTSCFPVDHECDGGASNCNCCGDDVYCA</sequence>
<organism>
    <name type="scientific">Phoneutria keyserlingi</name>
    <name type="common">Brazilian wandering spider</name>
    <name type="synonym">Ctenus keyserlingii</name>
    <dbReference type="NCBI Taxonomy" id="272754"/>
    <lineage>
        <taxon>Eukaryota</taxon>
        <taxon>Metazoa</taxon>
        <taxon>Ecdysozoa</taxon>
        <taxon>Arthropoda</taxon>
        <taxon>Chelicerata</taxon>
        <taxon>Arachnida</taxon>
        <taxon>Araneae</taxon>
        <taxon>Araneomorphae</taxon>
        <taxon>Entelegynae</taxon>
        <taxon>Lycosoidea</taxon>
        <taxon>Ctenidae</taxon>
        <taxon>Phoneutria</taxon>
    </lineage>
</organism>
<keyword id="KW-0903">Direct protein sequencing</keyword>
<keyword id="KW-1015">Disulfide bond</keyword>
<keyword id="KW-0960">Knottin</keyword>
<keyword id="KW-0528">Neurotoxin</keyword>
<keyword id="KW-0964">Secreted</keyword>
<keyword id="KW-0800">Toxin</keyword>
<protein>
    <recommendedName>
        <fullName>U5-ctenitoxin-Pk1b</fullName>
        <shortName>U5-CNTX-Pk1b</shortName>
    </recommendedName>
    <alternativeName>
        <fullName evidence="4">Neurotoxin PKTx16C1</fullName>
    </alternativeName>
    <alternativeName>
        <fullName evidence="5">Neurotoxin PKTx1B</fullName>
    </alternativeName>
</protein>
<dbReference type="ArachnoServer" id="AS000220">
    <property type="toxin name" value="U5-ctenitoxin-Pk1b"/>
</dbReference>
<dbReference type="GO" id="GO:0005576">
    <property type="term" value="C:extracellular region"/>
    <property type="evidence" value="ECO:0007669"/>
    <property type="project" value="UniProtKB-SubCell"/>
</dbReference>
<dbReference type="GO" id="GO:0090729">
    <property type="term" value="F:toxin activity"/>
    <property type="evidence" value="ECO:0007669"/>
    <property type="project" value="UniProtKB-KW"/>
</dbReference>
<dbReference type="InterPro" id="IPR013605">
    <property type="entry name" value="Toxin_34"/>
</dbReference>
<dbReference type="Pfam" id="PF08396">
    <property type="entry name" value="Toxin_34"/>
    <property type="match status" value="1"/>
</dbReference>
<evidence type="ECO:0000255" key="1"/>
<evidence type="ECO:0000269" key="2">
    <source>
    </source>
</evidence>
<evidence type="ECO:0000269" key="3">
    <source ref="2"/>
</evidence>
<evidence type="ECO:0000303" key="4">
    <source>
    </source>
</evidence>
<evidence type="ECO:0000303" key="5">
    <source ref="2"/>
</evidence>
<evidence type="ECO:0000305" key="6"/>
<feature type="chain" id="PRO_0000087625" description="U5-ctenitoxin-Pk1b">
    <location>
        <begin position="1"/>
        <end position="30" status="greater than"/>
    </location>
</feature>
<feature type="disulfide bond" evidence="1 6">
    <location>
        <begin position="6"/>
        <end position="23"/>
    </location>
</feature>
<feature type="disulfide bond" evidence="1 6">
    <location>
        <begin position="13"/>
        <end position="29"/>
    </location>
</feature>
<feature type="disulfide bond" evidence="1">
    <location>
        <begin position="20"/>
        <end status="unknown"/>
    </location>
</feature>
<feature type="disulfide bond" evidence="1 6">
    <location>
        <begin position="22"/>
        <end status="unknown"/>
    </location>
</feature>
<feature type="non-terminal residue" evidence="4">
    <location>
        <position position="30"/>
    </location>
</feature>
<reference evidence="6" key="1">
    <citation type="journal article" date="2006" name="Comp. Biochem. Physiol.">
        <title>Comparison of the partial proteomes of the venoms of Brazilian spiders of the genus Phoneutria.</title>
        <authorList>
            <person name="Richardson M."/>
            <person name="Pimenta A.M."/>
            <person name="Bemquerer M.P."/>
            <person name="Santoro M.M."/>
            <person name="Beirao P.S."/>
            <person name="Lima M.E."/>
            <person name="Figueiredo S.G."/>
            <person name="Bloch C. Jr."/>
            <person name="Vasconcelos E.A."/>
            <person name="Campos F.A."/>
            <person name="Gomes P.C."/>
            <person name="Cordeiro M.N."/>
        </authorList>
    </citation>
    <scope>PROTEIN SEQUENCE</scope>
    <scope>SUBCELLULAR LOCATION</scope>
    <scope>TISSUE SPECIFICITY</scope>
    <source>
        <tissue evidence="2">Venom</tissue>
    </source>
</reference>
<reference evidence="6" key="2">
    <citation type="submission" date="2004-06" db="UniProtKB">
        <title>Neurotoxin PKTx1B from venom of spider Phoneutria keyserlingi has strong sequence identity with PNTx1 from Phoneutria nigriventer.</title>
        <authorList>
            <person name="Richardson M."/>
            <person name="Pimenta A.M.C."/>
            <person name="Bemquerer M.P."/>
            <person name="Santoro M.M."/>
            <person name="Figueiredo S.G."/>
            <person name="Cordeiro M.N."/>
        </authorList>
    </citation>
    <scope>FUNCTION</scope>
</reference>